<keyword id="KW-1185">Reference proteome</keyword>
<keyword id="KW-0687">Ribonucleoprotein</keyword>
<keyword id="KW-0689">Ribosomal protein</keyword>
<keyword id="KW-0694">RNA-binding</keyword>
<keyword id="KW-0699">rRNA-binding</keyword>
<comment type="function">
    <text evidence="1">This protein binds specifically to 23S rRNA; its binding is stimulated by other ribosomal proteins, e.g. L4, L17, and L20. It is important during the early stages of 50S assembly. It makes multiple contacts with different domains of the 23S rRNA in the assembled 50S subunit and ribosome (By similarity).</text>
</comment>
<comment type="function">
    <text evidence="1">The globular domain of the protein is located near the polypeptide exit tunnel on the outside of the subunit, while an extended beta-hairpin is found that lines the wall of the exit tunnel in the center of the 70S ribosome.</text>
</comment>
<comment type="subunit">
    <text evidence="1">Part of the 50S ribosomal subunit.</text>
</comment>
<comment type="similarity">
    <text evidence="1">Belongs to the universal ribosomal protein uL22 family.</text>
</comment>
<proteinExistence type="inferred from homology"/>
<organism>
    <name type="scientific">Trichlorobacter lovleyi (strain ATCC BAA-1151 / DSM 17278 / SZ)</name>
    <name type="common">Geobacter lovleyi</name>
    <dbReference type="NCBI Taxonomy" id="398767"/>
    <lineage>
        <taxon>Bacteria</taxon>
        <taxon>Pseudomonadati</taxon>
        <taxon>Thermodesulfobacteriota</taxon>
        <taxon>Desulfuromonadia</taxon>
        <taxon>Geobacterales</taxon>
        <taxon>Geobacteraceae</taxon>
        <taxon>Trichlorobacter</taxon>
    </lineage>
</organism>
<name>RL22_TRIL1</name>
<accession>B3E7U0</accession>
<feature type="chain" id="PRO_1000142268" description="Large ribosomal subunit protein uL22">
    <location>
        <begin position="1"/>
        <end position="113"/>
    </location>
</feature>
<sequence length="113" mass="12283">MESSAKLSLARLSPRKTRTVADLVRGKGIQQALNTLSFLPNPSAQILLKLLKSAVANAEQKGVNDIDKLFVKTIFVDGGAVLKRFVPRAMGRASKIRKPTSHISVVLSDTKTR</sequence>
<reference key="1">
    <citation type="submission" date="2008-05" db="EMBL/GenBank/DDBJ databases">
        <title>Complete sequence of chromosome of Geobacter lovleyi SZ.</title>
        <authorList>
            <consortium name="US DOE Joint Genome Institute"/>
            <person name="Lucas S."/>
            <person name="Copeland A."/>
            <person name="Lapidus A."/>
            <person name="Glavina del Rio T."/>
            <person name="Dalin E."/>
            <person name="Tice H."/>
            <person name="Bruce D."/>
            <person name="Goodwin L."/>
            <person name="Pitluck S."/>
            <person name="Chertkov O."/>
            <person name="Meincke L."/>
            <person name="Brettin T."/>
            <person name="Detter J.C."/>
            <person name="Han C."/>
            <person name="Tapia R."/>
            <person name="Kuske C.R."/>
            <person name="Schmutz J."/>
            <person name="Larimer F."/>
            <person name="Land M."/>
            <person name="Hauser L."/>
            <person name="Kyrpides N."/>
            <person name="Mikhailova N."/>
            <person name="Sung Y."/>
            <person name="Fletcher K.E."/>
            <person name="Ritalahti K.M."/>
            <person name="Loeffler F.E."/>
            <person name="Richardson P."/>
        </authorList>
    </citation>
    <scope>NUCLEOTIDE SEQUENCE [LARGE SCALE GENOMIC DNA]</scope>
    <source>
        <strain>ATCC BAA-1151 / DSM 17278 / SZ</strain>
    </source>
</reference>
<evidence type="ECO:0000255" key="1">
    <source>
        <dbReference type="HAMAP-Rule" id="MF_01331"/>
    </source>
</evidence>
<evidence type="ECO:0000305" key="2"/>
<gene>
    <name evidence="1" type="primary">rplV</name>
    <name type="ordered locus">Glov_1351</name>
</gene>
<dbReference type="EMBL" id="CP001089">
    <property type="protein sequence ID" value="ACD95072.1"/>
    <property type="molecule type" value="Genomic_DNA"/>
</dbReference>
<dbReference type="RefSeq" id="WP_012469417.1">
    <property type="nucleotide sequence ID" value="NC_010814.1"/>
</dbReference>
<dbReference type="SMR" id="B3E7U0"/>
<dbReference type="STRING" id="398767.Glov_1351"/>
<dbReference type="KEGG" id="glo:Glov_1351"/>
<dbReference type="eggNOG" id="COG0091">
    <property type="taxonomic scope" value="Bacteria"/>
</dbReference>
<dbReference type="HOGENOM" id="CLU_083987_3_3_7"/>
<dbReference type="OrthoDB" id="9805969at2"/>
<dbReference type="Proteomes" id="UP000002420">
    <property type="component" value="Chromosome"/>
</dbReference>
<dbReference type="GO" id="GO:0022625">
    <property type="term" value="C:cytosolic large ribosomal subunit"/>
    <property type="evidence" value="ECO:0007669"/>
    <property type="project" value="TreeGrafter"/>
</dbReference>
<dbReference type="GO" id="GO:0019843">
    <property type="term" value="F:rRNA binding"/>
    <property type="evidence" value="ECO:0007669"/>
    <property type="project" value="UniProtKB-UniRule"/>
</dbReference>
<dbReference type="GO" id="GO:0003735">
    <property type="term" value="F:structural constituent of ribosome"/>
    <property type="evidence" value="ECO:0007669"/>
    <property type="project" value="InterPro"/>
</dbReference>
<dbReference type="GO" id="GO:0006412">
    <property type="term" value="P:translation"/>
    <property type="evidence" value="ECO:0007669"/>
    <property type="project" value="UniProtKB-UniRule"/>
</dbReference>
<dbReference type="CDD" id="cd00336">
    <property type="entry name" value="Ribosomal_L22"/>
    <property type="match status" value="1"/>
</dbReference>
<dbReference type="Gene3D" id="3.90.470.10">
    <property type="entry name" value="Ribosomal protein L22/L17"/>
    <property type="match status" value="1"/>
</dbReference>
<dbReference type="HAMAP" id="MF_01331_B">
    <property type="entry name" value="Ribosomal_uL22_B"/>
    <property type="match status" value="1"/>
</dbReference>
<dbReference type="InterPro" id="IPR001063">
    <property type="entry name" value="Ribosomal_uL22"/>
</dbReference>
<dbReference type="InterPro" id="IPR005727">
    <property type="entry name" value="Ribosomal_uL22_bac/chlpt-type"/>
</dbReference>
<dbReference type="InterPro" id="IPR047867">
    <property type="entry name" value="Ribosomal_uL22_bac/org-type"/>
</dbReference>
<dbReference type="InterPro" id="IPR018260">
    <property type="entry name" value="Ribosomal_uL22_CS"/>
</dbReference>
<dbReference type="InterPro" id="IPR036394">
    <property type="entry name" value="Ribosomal_uL22_sf"/>
</dbReference>
<dbReference type="NCBIfam" id="TIGR01044">
    <property type="entry name" value="rplV_bact"/>
    <property type="match status" value="1"/>
</dbReference>
<dbReference type="PANTHER" id="PTHR13501">
    <property type="entry name" value="CHLOROPLAST 50S RIBOSOMAL PROTEIN L22-RELATED"/>
    <property type="match status" value="1"/>
</dbReference>
<dbReference type="PANTHER" id="PTHR13501:SF8">
    <property type="entry name" value="LARGE RIBOSOMAL SUBUNIT PROTEIN UL22M"/>
    <property type="match status" value="1"/>
</dbReference>
<dbReference type="Pfam" id="PF00237">
    <property type="entry name" value="Ribosomal_L22"/>
    <property type="match status" value="1"/>
</dbReference>
<dbReference type="SUPFAM" id="SSF54843">
    <property type="entry name" value="Ribosomal protein L22"/>
    <property type="match status" value="1"/>
</dbReference>
<dbReference type="PROSITE" id="PS00464">
    <property type="entry name" value="RIBOSOMAL_L22"/>
    <property type="match status" value="1"/>
</dbReference>
<protein>
    <recommendedName>
        <fullName evidence="1">Large ribosomal subunit protein uL22</fullName>
    </recommendedName>
    <alternativeName>
        <fullName evidence="2">50S ribosomal protein L22</fullName>
    </alternativeName>
</protein>